<feature type="chain" id="PRO_1000091138" description="UDP-N-acetylmuramate--L-alanine ligase">
    <location>
        <begin position="1"/>
        <end position="443"/>
    </location>
</feature>
<feature type="binding site" evidence="1">
    <location>
        <begin position="110"/>
        <end position="116"/>
    </location>
    <ligand>
        <name>ATP</name>
        <dbReference type="ChEBI" id="CHEBI:30616"/>
    </ligand>
</feature>
<name>MURC_STREM</name>
<sequence length="443" mass="49837">MSKTYHFIGIKGAGMSALALLLHQMGHKVQGSDVEKYYFTQRGLEQAGITILPFSEDNISPDMELIAGNAFREDNNSEVAYAMRHQLPFKRYHEFLGEFMKQFTSLGVAGAHGKTSTTGLLSHVLKHMTATSYLIGDGTGHGAADARYFVFESDEYERHFMPYHPEYSIITNIDFDHPDYFTGLDDVFNAFNDYAKQVKKALFVYGEDEELRKISSPAPIYYYGFEDTNDFVAFDITRTTNGSDFKVKHKGHAIGQFHVPAYGRHNILNATAVIANLFIAGFDMKLVAEHLKSFSGVKRRFTEKVINDTIIIDDFAHHPTEIIATLDAARQKYPNKEIIAIFQPHTFTRTIALLDDFAHALNEADSVYLAPIYGSAREVDKGDVKVEDLAARVERPAKVISVDNVSPLLDHDNAVYVFMGAGDIQLYERSFEELLANLTKNNQ</sequence>
<protein>
    <recommendedName>
        <fullName evidence="1">UDP-N-acetylmuramate--L-alanine ligase</fullName>
        <ecNumber evidence="1">6.3.2.8</ecNumber>
    </recommendedName>
    <alternativeName>
        <fullName evidence="1">UDP-N-acetylmuramoyl-L-alanine synthetase</fullName>
    </alternativeName>
</protein>
<comment type="function">
    <text evidence="1">Cell wall formation.</text>
</comment>
<comment type="catalytic activity">
    <reaction evidence="1">
        <text>UDP-N-acetyl-alpha-D-muramate + L-alanine + ATP = UDP-N-acetyl-alpha-D-muramoyl-L-alanine + ADP + phosphate + H(+)</text>
        <dbReference type="Rhea" id="RHEA:23372"/>
        <dbReference type="ChEBI" id="CHEBI:15378"/>
        <dbReference type="ChEBI" id="CHEBI:30616"/>
        <dbReference type="ChEBI" id="CHEBI:43474"/>
        <dbReference type="ChEBI" id="CHEBI:57972"/>
        <dbReference type="ChEBI" id="CHEBI:70757"/>
        <dbReference type="ChEBI" id="CHEBI:83898"/>
        <dbReference type="ChEBI" id="CHEBI:456216"/>
        <dbReference type="EC" id="6.3.2.8"/>
    </reaction>
</comment>
<comment type="pathway">
    <text evidence="1">Cell wall biogenesis; peptidoglycan biosynthesis.</text>
</comment>
<comment type="subcellular location">
    <subcellularLocation>
        <location evidence="1">Cytoplasm</location>
    </subcellularLocation>
</comment>
<comment type="similarity">
    <text evidence="1">Belongs to the MurCDEF family.</text>
</comment>
<keyword id="KW-0067">ATP-binding</keyword>
<keyword id="KW-0131">Cell cycle</keyword>
<keyword id="KW-0132">Cell division</keyword>
<keyword id="KW-0133">Cell shape</keyword>
<keyword id="KW-0961">Cell wall biogenesis/degradation</keyword>
<keyword id="KW-0963">Cytoplasm</keyword>
<keyword id="KW-0436">Ligase</keyword>
<keyword id="KW-0547">Nucleotide-binding</keyword>
<keyword id="KW-0573">Peptidoglycan synthesis</keyword>
<accession>B4U4S2</accession>
<reference key="1">
    <citation type="journal article" date="2008" name="PLoS ONE">
        <title>Genome sequence of a lancefield group C Streptococcus zooepidemicus strain causing epidemic nephritis: new information about an old disease.</title>
        <authorList>
            <person name="Beres S.B."/>
            <person name="Sesso R."/>
            <person name="Pinto S.W.L."/>
            <person name="Hoe N.P."/>
            <person name="Porcella S.F."/>
            <person name="Deleo F.R."/>
            <person name="Musser J.M."/>
        </authorList>
    </citation>
    <scope>NUCLEOTIDE SEQUENCE [LARGE SCALE GENOMIC DNA]</scope>
    <source>
        <strain>MGCS10565</strain>
    </source>
</reference>
<gene>
    <name evidence="1" type="primary">murC</name>
    <name type="ordered locus">Sez_1658</name>
</gene>
<evidence type="ECO:0000255" key="1">
    <source>
        <dbReference type="HAMAP-Rule" id="MF_00046"/>
    </source>
</evidence>
<dbReference type="EC" id="6.3.2.8" evidence="1"/>
<dbReference type="EMBL" id="CP001129">
    <property type="protein sequence ID" value="ACG62989.1"/>
    <property type="molecule type" value="Genomic_DNA"/>
</dbReference>
<dbReference type="RefSeq" id="WP_012516245.1">
    <property type="nucleotide sequence ID" value="NC_011134.1"/>
</dbReference>
<dbReference type="SMR" id="B4U4S2"/>
<dbReference type="KEGG" id="sez:Sez_1658"/>
<dbReference type="HOGENOM" id="CLU_028104_1_0_9"/>
<dbReference type="UniPathway" id="UPA00219"/>
<dbReference type="Proteomes" id="UP000001873">
    <property type="component" value="Chromosome"/>
</dbReference>
<dbReference type="GO" id="GO:0005737">
    <property type="term" value="C:cytoplasm"/>
    <property type="evidence" value="ECO:0007669"/>
    <property type="project" value="UniProtKB-SubCell"/>
</dbReference>
<dbReference type="GO" id="GO:0005524">
    <property type="term" value="F:ATP binding"/>
    <property type="evidence" value="ECO:0007669"/>
    <property type="project" value="UniProtKB-UniRule"/>
</dbReference>
<dbReference type="GO" id="GO:0008763">
    <property type="term" value="F:UDP-N-acetylmuramate-L-alanine ligase activity"/>
    <property type="evidence" value="ECO:0007669"/>
    <property type="project" value="UniProtKB-UniRule"/>
</dbReference>
<dbReference type="GO" id="GO:0051301">
    <property type="term" value="P:cell division"/>
    <property type="evidence" value="ECO:0007669"/>
    <property type="project" value="UniProtKB-KW"/>
</dbReference>
<dbReference type="GO" id="GO:0071555">
    <property type="term" value="P:cell wall organization"/>
    <property type="evidence" value="ECO:0007669"/>
    <property type="project" value="UniProtKB-KW"/>
</dbReference>
<dbReference type="GO" id="GO:0009252">
    <property type="term" value="P:peptidoglycan biosynthetic process"/>
    <property type="evidence" value="ECO:0007669"/>
    <property type="project" value="UniProtKB-UniRule"/>
</dbReference>
<dbReference type="GO" id="GO:0008360">
    <property type="term" value="P:regulation of cell shape"/>
    <property type="evidence" value="ECO:0007669"/>
    <property type="project" value="UniProtKB-KW"/>
</dbReference>
<dbReference type="Gene3D" id="3.90.190.20">
    <property type="entry name" value="Mur ligase, C-terminal domain"/>
    <property type="match status" value="1"/>
</dbReference>
<dbReference type="Gene3D" id="3.40.1190.10">
    <property type="entry name" value="Mur-like, catalytic domain"/>
    <property type="match status" value="1"/>
</dbReference>
<dbReference type="Gene3D" id="3.40.50.720">
    <property type="entry name" value="NAD(P)-binding Rossmann-like Domain"/>
    <property type="match status" value="1"/>
</dbReference>
<dbReference type="HAMAP" id="MF_00046">
    <property type="entry name" value="MurC"/>
    <property type="match status" value="1"/>
</dbReference>
<dbReference type="InterPro" id="IPR036565">
    <property type="entry name" value="Mur-like_cat_sf"/>
</dbReference>
<dbReference type="InterPro" id="IPR004101">
    <property type="entry name" value="Mur_ligase_C"/>
</dbReference>
<dbReference type="InterPro" id="IPR036615">
    <property type="entry name" value="Mur_ligase_C_dom_sf"/>
</dbReference>
<dbReference type="InterPro" id="IPR013221">
    <property type="entry name" value="Mur_ligase_cen"/>
</dbReference>
<dbReference type="InterPro" id="IPR000713">
    <property type="entry name" value="Mur_ligase_N"/>
</dbReference>
<dbReference type="InterPro" id="IPR050061">
    <property type="entry name" value="MurCDEF_pg_biosynth"/>
</dbReference>
<dbReference type="InterPro" id="IPR005758">
    <property type="entry name" value="UDP-N-AcMur_Ala_ligase_MurC"/>
</dbReference>
<dbReference type="NCBIfam" id="TIGR01082">
    <property type="entry name" value="murC"/>
    <property type="match status" value="1"/>
</dbReference>
<dbReference type="PANTHER" id="PTHR43445:SF3">
    <property type="entry name" value="UDP-N-ACETYLMURAMATE--L-ALANINE LIGASE"/>
    <property type="match status" value="1"/>
</dbReference>
<dbReference type="PANTHER" id="PTHR43445">
    <property type="entry name" value="UDP-N-ACETYLMURAMATE--L-ALANINE LIGASE-RELATED"/>
    <property type="match status" value="1"/>
</dbReference>
<dbReference type="Pfam" id="PF01225">
    <property type="entry name" value="Mur_ligase"/>
    <property type="match status" value="1"/>
</dbReference>
<dbReference type="Pfam" id="PF02875">
    <property type="entry name" value="Mur_ligase_C"/>
    <property type="match status" value="1"/>
</dbReference>
<dbReference type="Pfam" id="PF08245">
    <property type="entry name" value="Mur_ligase_M"/>
    <property type="match status" value="1"/>
</dbReference>
<dbReference type="SUPFAM" id="SSF51984">
    <property type="entry name" value="MurCD N-terminal domain"/>
    <property type="match status" value="1"/>
</dbReference>
<dbReference type="SUPFAM" id="SSF53623">
    <property type="entry name" value="MurD-like peptide ligases, catalytic domain"/>
    <property type="match status" value="1"/>
</dbReference>
<dbReference type="SUPFAM" id="SSF53244">
    <property type="entry name" value="MurD-like peptide ligases, peptide-binding domain"/>
    <property type="match status" value="1"/>
</dbReference>
<proteinExistence type="inferred from homology"/>
<organism>
    <name type="scientific">Streptococcus equi subsp. zooepidemicus (strain MGCS10565)</name>
    <dbReference type="NCBI Taxonomy" id="552526"/>
    <lineage>
        <taxon>Bacteria</taxon>
        <taxon>Bacillati</taxon>
        <taxon>Bacillota</taxon>
        <taxon>Bacilli</taxon>
        <taxon>Lactobacillales</taxon>
        <taxon>Streptococcaceae</taxon>
        <taxon>Streptococcus</taxon>
    </lineage>
</organism>